<comment type="function">
    <text evidence="1">IGPS catalyzes the conversion of PRFAR and glutamine to IGP, AICAR and glutamate. The HisF subunit catalyzes the cyclization activity that produces IGP and AICAR from PRFAR using the ammonia provided by the HisH subunit.</text>
</comment>
<comment type="catalytic activity">
    <reaction evidence="1">
        <text>5-[(5-phospho-1-deoxy-D-ribulos-1-ylimino)methylamino]-1-(5-phospho-beta-D-ribosyl)imidazole-4-carboxamide + L-glutamine = D-erythro-1-(imidazol-4-yl)glycerol 3-phosphate + 5-amino-1-(5-phospho-beta-D-ribosyl)imidazole-4-carboxamide + L-glutamate + H(+)</text>
        <dbReference type="Rhea" id="RHEA:24793"/>
        <dbReference type="ChEBI" id="CHEBI:15378"/>
        <dbReference type="ChEBI" id="CHEBI:29985"/>
        <dbReference type="ChEBI" id="CHEBI:58278"/>
        <dbReference type="ChEBI" id="CHEBI:58359"/>
        <dbReference type="ChEBI" id="CHEBI:58475"/>
        <dbReference type="ChEBI" id="CHEBI:58525"/>
        <dbReference type="EC" id="4.3.2.10"/>
    </reaction>
</comment>
<comment type="pathway">
    <text evidence="1">Amino-acid biosynthesis; L-histidine biosynthesis; L-histidine from 5-phospho-alpha-D-ribose 1-diphosphate: step 5/9.</text>
</comment>
<comment type="subunit">
    <text evidence="1">Heterodimer of HisH and HisF.</text>
</comment>
<comment type="subcellular location">
    <subcellularLocation>
        <location evidence="1">Cytoplasm</location>
    </subcellularLocation>
</comment>
<comment type="similarity">
    <text evidence="1">Belongs to the HisA/HisF family.</text>
</comment>
<gene>
    <name evidence="1" type="primary">hisF</name>
    <name type="ordered locus">RPA0313</name>
</gene>
<evidence type="ECO:0000255" key="1">
    <source>
        <dbReference type="HAMAP-Rule" id="MF_01013"/>
    </source>
</evidence>
<protein>
    <recommendedName>
        <fullName evidence="1">Imidazole glycerol phosphate synthase subunit HisF</fullName>
        <ecNumber evidence="1">4.3.2.10</ecNumber>
    </recommendedName>
    <alternativeName>
        <fullName evidence="1">IGP synthase cyclase subunit</fullName>
    </alternativeName>
    <alternativeName>
        <fullName evidence="1">IGP synthase subunit HisF</fullName>
    </alternativeName>
    <alternativeName>
        <fullName evidence="1">ImGP synthase subunit HisF</fullName>
        <shortName evidence="1">IGPS subunit HisF</shortName>
    </alternativeName>
</protein>
<dbReference type="EC" id="4.3.2.10" evidence="1"/>
<dbReference type="EMBL" id="BX572593">
    <property type="protein sequence ID" value="CAE25757.1"/>
    <property type="molecule type" value="Genomic_DNA"/>
</dbReference>
<dbReference type="RefSeq" id="WP_011155881.1">
    <property type="nucleotide sequence ID" value="NZ_CP116810.1"/>
</dbReference>
<dbReference type="SMR" id="P60667"/>
<dbReference type="STRING" id="258594.RPA0313"/>
<dbReference type="GeneID" id="66891323"/>
<dbReference type="eggNOG" id="COG0107">
    <property type="taxonomic scope" value="Bacteria"/>
</dbReference>
<dbReference type="HOGENOM" id="CLU_048577_4_0_5"/>
<dbReference type="PhylomeDB" id="P60667"/>
<dbReference type="UniPathway" id="UPA00031">
    <property type="reaction ID" value="UER00010"/>
</dbReference>
<dbReference type="GO" id="GO:0005737">
    <property type="term" value="C:cytoplasm"/>
    <property type="evidence" value="ECO:0007669"/>
    <property type="project" value="UniProtKB-SubCell"/>
</dbReference>
<dbReference type="GO" id="GO:0000107">
    <property type="term" value="F:imidazoleglycerol-phosphate synthase activity"/>
    <property type="evidence" value="ECO:0007669"/>
    <property type="project" value="UniProtKB-UniRule"/>
</dbReference>
<dbReference type="GO" id="GO:0016829">
    <property type="term" value="F:lyase activity"/>
    <property type="evidence" value="ECO:0007669"/>
    <property type="project" value="UniProtKB-KW"/>
</dbReference>
<dbReference type="GO" id="GO:0000105">
    <property type="term" value="P:L-histidine biosynthetic process"/>
    <property type="evidence" value="ECO:0007669"/>
    <property type="project" value="UniProtKB-UniRule"/>
</dbReference>
<dbReference type="CDD" id="cd04731">
    <property type="entry name" value="HisF"/>
    <property type="match status" value="1"/>
</dbReference>
<dbReference type="FunFam" id="3.20.20.70:FF:000006">
    <property type="entry name" value="Imidazole glycerol phosphate synthase subunit HisF"/>
    <property type="match status" value="1"/>
</dbReference>
<dbReference type="Gene3D" id="3.20.20.70">
    <property type="entry name" value="Aldolase class I"/>
    <property type="match status" value="1"/>
</dbReference>
<dbReference type="HAMAP" id="MF_01013">
    <property type="entry name" value="HisF"/>
    <property type="match status" value="1"/>
</dbReference>
<dbReference type="InterPro" id="IPR013785">
    <property type="entry name" value="Aldolase_TIM"/>
</dbReference>
<dbReference type="InterPro" id="IPR006062">
    <property type="entry name" value="His_biosynth"/>
</dbReference>
<dbReference type="InterPro" id="IPR004651">
    <property type="entry name" value="HisF"/>
</dbReference>
<dbReference type="InterPro" id="IPR050064">
    <property type="entry name" value="IGPS_HisA/HisF"/>
</dbReference>
<dbReference type="InterPro" id="IPR011060">
    <property type="entry name" value="RibuloseP-bd_barrel"/>
</dbReference>
<dbReference type="NCBIfam" id="TIGR00735">
    <property type="entry name" value="hisF"/>
    <property type="match status" value="1"/>
</dbReference>
<dbReference type="PANTHER" id="PTHR21235:SF2">
    <property type="entry name" value="IMIDAZOLE GLYCEROL PHOSPHATE SYNTHASE HISHF"/>
    <property type="match status" value="1"/>
</dbReference>
<dbReference type="PANTHER" id="PTHR21235">
    <property type="entry name" value="IMIDAZOLE GLYCEROL PHOSPHATE SYNTHASE SUBUNIT HISF/H IGP SYNTHASE SUBUNIT HISF/H"/>
    <property type="match status" value="1"/>
</dbReference>
<dbReference type="Pfam" id="PF00977">
    <property type="entry name" value="His_biosynth"/>
    <property type="match status" value="1"/>
</dbReference>
<dbReference type="SUPFAM" id="SSF51366">
    <property type="entry name" value="Ribulose-phoshate binding barrel"/>
    <property type="match status" value="1"/>
</dbReference>
<accession>P60667</accession>
<sequence length="255" mass="27229">MFKVRVIPCLDVKDGRVVKGVNFVDLRDAGDPVEAAIAYDAAGADELCFLDITATHENRGIMLDVVRRTAEACFMPVTVGGGVRTVDDIKTLLRSGADKVSINSAAVARREFVKEAAEKFGDQCIVVAIDAKRVPGRDRWEIFTHGGRKGTGIDAIEFAQEVVSLGAGEILLTSMDRDGTKSGFDIPLTRAIADSVGVPVIASGGVGNLDHLVDGIREGHATAVLAASIFHFGEYTIRQAKDHMVQAGLPMRLDP</sequence>
<organism>
    <name type="scientific">Rhodopseudomonas palustris (strain ATCC BAA-98 / CGA009)</name>
    <dbReference type="NCBI Taxonomy" id="258594"/>
    <lineage>
        <taxon>Bacteria</taxon>
        <taxon>Pseudomonadati</taxon>
        <taxon>Pseudomonadota</taxon>
        <taxon>Alphaproteobacteria</taxon>
        <taxon>Hyphomicrobiales</taxon>
        <taxon>Nitrobacteraceae</taxon>
        <taxon>Rhodopseudomonas</taxon>
    </lineage>
</organism>
<feature type="chain" id="PRO_0000142221" description="Imidazole glycerol phosphate synthase subunit HisF">
    <location>
        <begin position="1"/>
        <end position="255"/>
    </location>
</feature>
<feature type="active site" evidence="1">
    <location>
        <position position="11"/>
    </location>
</feature>
<feature type="active site" evidence="1">
    <location>
        <position position="130"/>
    </location>
</feature>
<reference key="1">
    <citation type="journal article" date="2004" name="Nat. Biotechnol.">
        <title>Complete genome sequence of the metabolically versatile photosynthetic bacterium Rhodopseudomonas palustris.</title>
        <authorList>
            <person name="Larimer F.W."/>
            <person name="Chain P."/>
            <person name="Hauser L."/>
            <person name="Lamerdin J.E."/>
            <person name="Malfatti S."/>
            <person name="Do L."/>
            <person name="Land M.L."/>
            <person name="Pelletier D.A."/>
            <person name="Beatty J.T."/>
            <person name="Lang A.S."/>
            <person name="Tabita F.R."/>
            <person name="Gibson J.L."/>
            <person name="Hanson T.E."/>
            <person name="Bobst C."/>
            <person name="Torres y Torres J.L."/>
            <person name="Peres C."/>
            <person name="Harrison F.H."/>
            <person name="Gibson J."/>
            <person name="Harwood C.S."/>
        </authorList>
    </citation>
    <scope>NUCLEOTIDE SEQUENCE [LARGE SCALE GENOMIC DNA]</scope>
    <source>
        <strain>ATCC BAA-98 / CGA009</strain>
    </source>
</reference>
<proteinExistence type="inferred from homology"/>
<name>HIS6_RHOPA</name>
<keyword id="KW-0028">Amino-acid biosynthesis</keyword>
<keyword id="KW-0963">Cytoplasm</keyword>
<keyword id="KW-0368">Histidine biosynthesis</keyword>
<keyword id="KW-0456">Lyase</keyword>